<evidence type="ECO:0000255" key="1">
    <source>
        <dbReference type="HAMAP-Rule" id="MF_01810"/>
    </source>
</evidence>
<evidence type="ECO:0000256" key="2">
    <source>
        <dbReference type="SAM" id="MobiDB-lite"/>
    </source>
</evidence>
<name>YIDC_CELJU</name>
<organism>
    <name type="scientific">Cellvibrio japonicus (strain Ueda107)</name>
    <name type="common">Pseudomonas fluorescens subsp. cellulosa</name>
    <dbReference type="NCBI Taxonomy" id="498211"/>
    <lineage>
        <taxon>Bacteria</taxon>
        <taxon>Pseudomonadati</taxon>
        <taxon>Pseudomonadota</taxon>
        <taxon>Gammaproteobacteria</taxon>
        <taxon>Cellvibrionales</taxon>
        <taxon>Cellvibrionaceae</taxon>
        <taxon>Cellvibrio</taxon>
    </lineage>
</organism>
<sequence>MDWQKNLLLAAIAAVILMLFIRWNHFQEQLPQHQAGNTPAGSSIAAIAPDSNGDIPSAVPTASDTPQATADSSKVELIQVKTDNLLVTINPLGGDIASVSLPRHFAKLNTPDEPFVLLDNRNNHTYVSQSGLIGTNGTDTAQGRPLFNSSSTSYELKEGSDGLVVDLTLQQGAVNITKRFSFKRGDYLIGVEYLIDNQAETPWSAQLYGQIKRDSQNFVKVSALEMNPYLGAAITTSEENYKKIHFEDIAKQTFETSRQGGWVAMVQHYFISAWIPDASSQVNYKLRKLGDQDLYLLGFTTQPVVVEPGSKGVIKASFYAGPKDTERLEEISPYLDLTVDYGWLWWIAKPLFAFLKFIHGFLGNWGLAIIGLTLSVKLLFFPLSAASYRSMAKMRKLQPKLLELKERYGEDRQKFSQEMMKLYKTEQVNPFGGCLPLLIQMPVFIALYWVLMESVELRHAPFFGWIEDLSRMDPYFVLPIIYGATMWIMQKLNPQPTDPMQARIMNMLPFVFTFMFLWFPAGLVLYWVTNNLLSIAQQYVITRQIERADSKA</sequence>
<proteinExistence type="inferred from homology"/>
<accession>B3PIU1</accession>
<protein>
    <recommendedName>
        <fullName evidence="1">Membrane protein insertase YidC</fullName>
    </recommendedName>
    <alternativeName>
        <fullName evidence="1">Foldase YidC</fullName>
    </alternativeName>
    <alternativeName>
        <fullName evidence="1">Membrane integrase YidC</fullName>
    </alternativeName>
    <alternativeName>
        <fullName evidence="1">Membrane protein YidC</fullName>
    </alternativeName>
</protein>
<gene>
    <name evidence="1" type="primary">yidC</name>
    <name type="ordered locus">CJA_3823</name>
</gene>
<feature type="chain" id="PRO_1000187647" description="Membrane protein insertase YidC">
    <location>
        <begin position="1"/>
        <end position="552"/>
    </location>
</feature>
<feature type="transmembrane region" description="Helical" evidence="1">
    <location>
        <begin position="6"/>
        <end position="26"/>
    </location>
</feature>
<feature type="transmembrane region" description="Helical" evidence="1">
    <location>
        <begin position="365"/>
        <end position="387"/>
    </location>
</feature>
<feature type="transmembrane region" description="Helical" evidence="1">
    <location>
        <begin position="431"/>
        <end position="451"/>
    </location>
</feature>
<feature type="transmembrane region" description="Helical" evidence="1">
    <location>
        <begin position="472"/>
        <end position="492"/>
    </location>
</feature>
<feature type="transmembrane region" description="Helical" evidence="1">
    <location>
        <begin position="508"/>
        <end position="528"/>
    </location>
</feature>
<feature type="region of interest" description="Disordered" evidence="2">
    <location>
        <begin position="32"/>
        <end position="70"/>
    </location>
</feature>
<feature type="compositionally biased region" description="Polar residues" evidence="2">
    <location>
        <begin position="32"/>
        <end position="41"/>
    </location>
</feature>
<feature type="compositionally biased region" description="Polar residues" evidence="2">
    <location>
        <begin position="60"/>
        <end position="70"/>
    </location>
</feature>
<keyword id="KW-0997">Cell inner membrane</keyword>
<keyword id="KW-1003">Cell membrane</keyword>
<keyword id="KW-0143">Chaperone</keyword>
<keyword id="KW-0472">Membrane</keyword>
<keyword id="KW-0653">Protein transport</keyword>
<keyword id="KW-1185">Reference proteome</keyword>
<keyword id="KW-0812">Transmembrane</keyword>
<keyword id="KW-1133">Transmembrane helix</keyword>
<keyword id="KW-0813">Transport</keyword>
<dbReference type="EMBL" id="CP000934">
    <property type="protein sequence ID" value="ACE84210.1"/>
    <property type="molecule type" value="Genomic_DNA"/>
</dbReference>
<dbReference type="RefSeq" id="WP_012489386.1">
    <property type="nucleotide sequence ID" value="NC_010995.1"/>
</dbReference>
<dbReference type="SMR" id="B3PIU1"/>
<dbReference type="STRING" id="498211.CJA_3823"/>
<dbReference type="KEGG" id="cja:CJA_3823"/>
<dbReference type="eggNOG" id="COG0706">
    <property type="taxonomic scope" value="Bacteria"/>
</dbReference>
<dbReference type="HOGENOM" id="CLU_016535_3_0_6"/>
<dbReference type="OrthoDB" id="9780552at2"/>
<dbReference type="Proteomes" id="UP000001036">
    <property type="component" value="Chromosome"/>
</dbReference>
<dbReference type="GO" id="GO:0005886">
    <property type="term" value="C:plasma membrane"/>
    <property type="evidence" value="ECO:0007669"/>
    <property type="project" value="UniProtKB-SubCell"/>
</dbReference>
<dbReference type="GO" id="GO:0032977">
    <property type="term" value="F:membrane insertase activity"/>
    <property type="evidence" value="ECO:0007669"/>
    <property type="project" value="InterPro"/>
</dbReference>
<dbReference type="GO" id="GO:0051205">
    <property type="term" value="P:protein insertion into membrane"/>
    <property type="evidence" value="ECO:0007669"/>
    <property type="project" value="TreeGrafter"/>
</dbReference>
<dbReference type="GO" id="GO:0015031">
    <property type="term" value="P:protein transport"/>
    <property type="evidence" value="ECO:0007669"/>
    <property type="project" value="UniProtKB-KW"/>
</dbReference>
<dbReference type="CDD" id="cd20070">
    <property type="entry name" value="5TM_YidC_Alb3"/>
    <property type="match status" value="1"/>
</dbReference>
<dbReference type="CDD" id="cd19961">
    <property type="entry name" value="EcYidC-like_peri"/>
    <property type="match status" value="1"/>
</dbReference>
<dbReference type="Gene3D" id="2.70.98.90">
    <property type="match status" value="1"/>
</dbReference>
<dbReference type="HAMAP" id="MF_01810">
    <property type="entry name" value="YidC_type1"/>
    <property type="match status" value="1"/>
</dbReference>
<dbReference type="InterPro" id="IPR019998">
    <property type="entry name" value="Membr_insert_YidC"/>
</dbReference>
<dbReference type="InterPro" id="IPR028053">
    <property type="entry name" value="Membr_insert_YidC_N"/>
</dbReference>
<dbReference type="InterPro" id="IPR001708">
    <property type="entry name" value="YidC/ALB3/OXA1/COX18"/>
</dbReference>
<dbReference type="InterPro" id="IPR028055">
    <property type="entry name" value="YidC/Oxa/ALB_C"/>
</dbReference>
<dbReference type="InterPro" id="IPR047196">
    <property type="entry name" value="YidC_ALB_C"/>
</dbReference>
<dbReference type="InterPro" id="IPR038221">
    <property type="entry name" value="YidC_periplasmic_sf"/>
</dbReference>
<dbReference type="NCBIfam" id="NF002352">
    <property type="entry name" value="PRK01318.1-3"/>
    <property type="match status" value="1"/>
</dbReference>
<dbReference type="NCBIfam" id="NF002353">
    <property type="entry name" value="PRK01318.1-4"/>
    <property type="match status" value="1"/>
</dbReference>
<dbReference type="NCBIfam" id="TIGR03593">
    <property type="entry name" value="yidC_nterm"/>
    <property type="match status" value="1"/>
</dbReference>
<dbReference type="NCBIfam" id="TIGR03592">
    <property type="entry name" value="yidC_oxa1_cterm"/>
    <property type="match status" value="1"/>
</dbReference>
<dbReference type="PANTHER" id="PTHR12428:SF65">
    <property type="entry name" value="CYTOCHROME C OXIDASE ASSEMBLY PROTEIN COX18, MITOCHONDRIAL"/>
    <property type="match status" value="1"/>
</dbReference>
<dbReference type="PANTHER" id="PTHR12428">
    <property type="entry name" value="OXA1"/>
    <property type="match status" value="1"/>
</dbReference>
<dbReference type="Pfam" id="PF02096">
    <property type="entry name" value="60KD_IMP"/>
    <property type="match status" value="1"/>
</dbReference>
<dbReference type="Pfam" id="PF14849">
    <property type="entry name" value="YidC_periplas"/>
    <property type="match status" value="1"/>
</dbReference>
<dbReference type="PRINTS" id="PR00701">
    <property type="entry name" value="60KDINNERMP"/>
</dbReference>
<dbReference type="PRINTS" id="PR01900">
    <property type="entry name" value="YIDCPROTEIN"/>
</dbReference>
<comment type="function">
    <text evidence="1">Required for the insertion and/or proper folding and/or complex formation of integral membrane proteins into the membrane. Involved in integration of membrane proteins that insert both dependently and independently of the Sec translocase complex, as well as at least some lipoproteins. Aids folding of multispanning membrane proteins.</text>
</comment>
<comment type="subunit">
    <text evidence="1">Interacts with the Sec translocase complex via SecD. Specifically interacts with transmembrane segments of nascent integral membrane proteins during membrane integration.</text>
</comment>
<comment type="subcellular location">
    <subcellularLocation>
        <location evidence="1">Cell inner membrane</location>
        <topology evidence="1">Multi-pass membrane protein</topology>
    </subcellularLocation>
</comment>
<comment type="similarity">
    <text evidence="1">Belongs to the OXA1/ALB3/YidC family. Type 1 subfamily.</text>
</comment>
<reference key="1">
    <citation type="journal article" date="2008" name="J. Bacteriol.">
        <title>Insights into plant cell wall degradation from the genome sequence of the soil bacterium Cellvibrio japonicus.</title>
        <authorList>
            <person name="DeBoy R.T."/>
            <person name="Mongodin E.F."/>
            <person name="Fouts D.E."/>
            <person name="Tailford L.E."/>
            <person name="Khouri H."/>
            <person name="Emerson J.B."/>
            <person name="Mohamoud Y."/>
            <person name="Watkins K."/>
            <person name="Henrissat B."/>
            <person name="Gilbert H.J."/>
            <person name="Nelson K.E."/>
        </authorList>
    </citation>
    <scope>NUCLEOTIDE SEQUENCE [LARGE SCALE GENOMIC DNA]</scope>
    <source>
        <strain>Ueda107</strain>
    </source>
</reference>